<organism>
    <name type="scientific">Rippkaea orientalis (strain PCC 8801 / RF-1)</name>
    <name type="common">Cyanothece sp. (strain PCC 8801)</name>
    <dbReference type="NCBI Taxonomy" id="41431"/>
    <lineage>
        <taxon>Bacteria</taxon>
        <taxon>Bacillati</taxon>
        <taxon>Cyanobacteriota</taxon>
        <taxon>Cyanophyceae</taxon>
        <taxon>Oscillatoriophycideae</taxon>
        <taxon>Chroococcales</taxon>
        <taxon>Aphanothecaceae</taxon>
        <taxon>Rippkaea</taxon>
        <taxon>Rippkaea orientalis</taxon>
    </lineage>
</organism>
<dbReference type="EC" id="1.3.7.5" evidence="1"/>
<dbReference type="EMBL" id="CP001287">
    <property type="protein sequence ID" value="ACK65771.1"/>
    <property type="molecule type" value="Genomic_DNA"/>
</dbReference>
<dbReference type="RefSeq" id="WP_012595044.1">
    <property type="nucleotide sequence ID" value="NC_011726.1"/>
</dbReference>
<dbReference type="SMR" id="B7JWS2"/>
<dbReference type="STRING" id="41431.PCC8801_1724"/>
<dbReference type="KEGG" id="cyp:PCC8801_1724"/>
<dbReference type="eggNOG" id="ENOG502Z7RN">
    <property type="taxonomic scope" value="Bacteria"/>
</dbReference>
<dbReference type="HOGENOM" id="CLU_074224_0_0_3"/>
<dbReference type="OrthoDB" id="581340at2"/>
<dbReference type="Proteomes" id="UP000008204">
    <property type="component" value="Chromosome"/>
</dbReference>
<dbReference type="GO" id="GO:0050897">
    <property type="term" value="F:cobalt ion binding"/>
    <property type="evidence" value="ECO:0007669"/>
    <property type="project" value="InterPro"/>
</dbReference>
<dbReference type="GO" id="GO:0050620">
    <property type="term" value="F:phycocyanobilin:ferredoxin oxidoreductase activity"/>
    <property type="evidence" value="ECO:0007669"/>
    <property type="project" value="UniProtKB-UniRule"/>
</dbReference>
<dbReference type="GO" id="GO:0010024">
    <property type="term" value="P:phytochromobilin biosynthetic process"/>
    <property type="evidence" value="ECO:0007669"/>
    <property type="project" value="InterPro"/>
</dbReference>
<dbReference type="Gene3D" id="3.40.1500.20">
    <property type="match status" value="1"/>
</dbReference>
<dbReference type="HAMAP" id="MF_00618">
    <property type="entry name" value="Ferredoxin_bilin_red"/>
    <property type="match status" value="1"/>
</dbReference>
<dbReference type="InterPro" id="IPR009249">
    <property type="entry name" value="Ferredoxin-dep_bilin_Rdtase"/>
</dbReference>
<dbReference type="InterPro" id="IPR022870">
    <property type="entry name" value="Ferredoxin_bilin_OxRdtase"/>
</dbReference>
<dbReference type="NCBIfam" id="NF002760">
    <property type="entry name" value="PRK02816.1"/>
    <property type="match status" value="1"/>
</dbReference>
<dbReference type="PANTHER" id="PTHR34557">
    <property type="entry name" value="PHYTOCHROMOBILIN:FERREDOXIN OXIDOREDUCTASE, CHLOROPLASTIC"/>
    <property type="match status" value="1"/>
</dbReference>
<dbReference type="PANTHER" id="PTHR34557:SF1">
    <property type="entry name" value="PHYTOCHROMOBILIN:FERREDOXIN OXIDOREDUCTASE, CHLOROPLASTIC"/>
    <property type="match status" value="1"/>
</dbReference>
<dbReference type="Pfam" id="PF05996">
    <property type="entry name" value="Fe_bilin_red"/>
    <property type="match status" value="1"/>
</dbReference>
<sequence>MLDTSPVSIRSQLNPLICQLAEVILSHWQEYLSLSLYKLPDGLGYVEGKLEGERLVIENRCYQAPQFRKMHLELAKVGKGLDILHCVMFPNPDYSLPMFGCDIVANSRAVSAAIADLSPANAELTLSPTYQKALSQLPSLDFRESRDLPEWGDIFSEYCLFIRPTNAEEETQFINRVADFLKIHCQLAVQSQPVSVEQETLNLAGQKYYCTKQQQNDKTRRVLEKAFGQEWADKYITQVLFDLPY</sequence>
<proteinExistence type="inferred from homology"/>
<protein>
    <recommendedName>
        <fullName evidence="1">Phycocyanobilin:ferredoxin oxidoreductase</fullName>
        <ecNumber evidence="1">1.3.7.5</ecNumber>
    </recommendedName>
</protein>
<feature type="chain" id="PRO_1000130440" description="Phycocyanobilin:ferredoxin oxidoreductase">
    <location>
        <begin position="1"/>
        <end position="245"/>
    </location>
</feature>
<gene>
    <name evidence="1" type="primary">pcyA</name>
    <name type="ordered locus">PCC8801_1724</name>
</gene>
<reference key="1">
    <citation type="journal article" date="2011" name="MBio">
        <title>Novel metabolic attributes of the genus Cyanothece, comprising a group of unicellular nitrogen-fixing Cyanobacteria.</title>
        <authorList>
            <person name="Bandyopadhyay A."/>
            <person name="Elvitigala T."/>
            <person name="Welsh E."/>
            <person name="Stockel J."/>
            <person name="Liberton M."/>
            <person name="Min H."/>
            <person name="Sherman L.A."/>
            <person name="Pakrasi H.B."/>
        </authorList>
    </citation>
    <scope>NUCLEOTIDE SEQUENCE [LARGE SCALE GENOMIC DNA]</scope>
    <source>
        <strain>PCC 8801 / RF-1</strain>
    </source>
</reference>
<evidence type="ECO:0000255" key="1">
    <source>
        <dbReference type="HAMAP-Rule" id="MF_00618"/>
    </source>
</evidence>
<name>PCYA_RIPO1</name>
<comment type="function">
    <text evidence="1">Catalyzes the four-electron reduction of biliverdin IX-alpha (2-electron reduction at both the A and D rings); the reaction proceeds via an isolatable 2-electron intermediate, 181,182-dihydrobiliverdin.</text>
</comment>
<comment type="catalytic activity">
    <reaction evidence="1">
        <text>(2R,3Z)-phycocyanobilin + 4 oxidized [2Fe-2S]-[ferredoxin] = biliverdin IXalpha + 4 reduced [2Fe-2S]-[ferredoxin] + 4 H(+)</text>
        <dbReference type="Rhea" id="RHEA:15309"/>
        <dbReference type="Rhea" id="RHEA-COMP:10000"/>
        <dbReference type="Rhea" id="RHEA-COMP:10001"/>
        <dbReference type="ChEBI" id="CHEBI:15378"/>
        <dbReference type="ChEBI" id="CHEBI:33737"/>
        <dbReference type="ChEBI" id="CHEBI:33738"/>
        <dbReference type="ChEBI" id="CHEBI:57437"/>
        <dbReference type="ChEBI" id="CHEBI:57991"/>
        <dbReference type="EC" id="1.3.7.5"/>
    </reaction>
</comment>
<comment type="similarity">
    <text evidence="1">Belongs to the HY2 family.</text>
</comment>
<accession>B7JWS2</accession>
<keyword id="KW-0560">Oxidoreductase</keyword>
<keyword id="KW-1185">Reference proteome</keyword>